<dbReference type="EC" id="6.1.1.20" evidence="1"/>
<dbReference type="EMBL" id="AE016958">
    <property type="protein sequence ID" value="AAS03676.1"/>
    <property type="molecule type" value="Genomic_DNA"/>
</dbReference>
<dbReference type="RefSeq" id="WP_003877766.1">
    <property type="nucleotide sequence ID" value="NZ_CP106873.1"/>
</dbReference>
<dbReference type="SMR" id="Q740J1"/>
<dbReference type="STRING" id="262316.MAP_1359"/>
<dbReference type="KEGG" id="mpa:MAP_1359"/>
<dbReference type="PATRIC" id="fig|262316.17.peg.1433"/>
<dbReference type="eggNOG" id="COG0016">
    <property type="taxonomic scope" value="Bacteria"/>
</dbReference>
<dbReference type="HOGENOM" id="CLU_025086_0_1_11"/>
<dbReference type="Proteomes" id="UP000000580">
    <property type="component" value="Chromosome"/>
</dbReference>
<dbReference type="GO" id="GO:0005737">
    <property type="term" value="C:cytoplasm"/>
    <property type="evidence" value="ECO:0007669"/>
    <property type="project" value="UniProtKB-SubCell"/>
</dbReference>
<dbReference type="GO" id="GO:0005524">
    <property type="term" value="F:ATP binding"/>
    <property type="evidence" value="ECO:0007669"/>
    <property type="project" value="UniProtKB-UniRule"/>
</dbReference>
<dbReference type="GO" id="GO:0000287">
    <property type="term" value="F:magnesium ion binding"/>
    <property type="evidence" value="ECO:0007669"/>
    <property type="project" value="UniProtKB-UniRule"/>
</dbReference>
<dbReference type="GO" id="GO:0004826">
    <property type="term" value="F:phenylalanine-tRNA ligase activity"/>
    <property type="evidence" value="ECO:0007669"/>
    <property type="project" value="UniProtKB-UniRule"/>
</dbReference>
<dbReference type="GO" id="GO:0000049">
    <property type="term" value="F:tRNA binding"/>
    <property type="evidence" value="ECO:0007669"/>
    <property type="project" value="InterPro"/>
</dbReference>
<dbReference type="GO" id="GO:0006432">
    <property type="term" value="P:phenylalanyl-tRNA aminoacylation"/>
    <property type="evidence" value="ECO:0007669"/>
    <property type="project" value="UniProtKB-UniRule"/>
</dbReference>
<dbReference type="CDD" id="cd00496">
    <property type="entry name" value="PheRS_alpha_core"/>
    <property type="match status" value="1"/>
</dbReference>
<dbReference type="FunFam" id="3.30.930.10:FF:000003">
    <property type="entry name" value="Phenylalanine--tRNA ligase alpha subunit"/>
    <property type="match status" value="1"/>
</dbReference>
<dbReference type="Gene3D" id="3.30.930.10">
    <property type="entry name" value="Bira Bifunctional Protein, Domain 2"/>
    <property type="match status" value="1"/>
</dbReference>
<dbReference type="HAMAP" id="MF_00281">
    <property type="entry name" value="Phe_tRNA_synth_alpha1"/>
    <property type="match status" value="1"/>
</dbReference>
<dbReference type="InterPro" id="IPR006195">
    <property type="entry name" value="aa-tRNA-synth_II"/>
</dbReference>
<dbReference type="InterPro" id="IPR045864">
    <property type="entry name" value="aa-tRNA-synth_II/BPL/LPL"/>
</dbReference>
<dbReference type="InterPro" id="IPR004529">
    <property type="entry name" value="Phe-tRNA-synth_IIc_asu"/>
</dbReference>
<dbReference type="InterPro" id="IPR004188">
    <property type="entry name" value="Phe-tRNA_ligase_II_N"/>
</dbReference>
<dbReference type="InterPro" id="IPR022911">
    <property type="entry name" value="Phe_tRNA_ligase_alpha1_bac"/>
</dbReference>
<dbReference type="InterPro" id="IPR002319">
    <property type="entry name" value="Phenylalanyl-tRNA_Synthase"/>
</dbReference>
<dbReference type="InterPro" id="IPR010978">
    <property type="entry name" value="tRNA-bd_arm"/>
</dbReference>
<dbReference type="NCBIfam" id="TIGR00468">
    <property type="entry name" value="pheS"/>
    <property type="match status" value="1"/>
</dbReference>
<dbReference type="PANTHER" id="PTHR11538:SF41">
    <property type="entry name" value="PHENYLALANINE--TRNA LIGASE, MITOCHONDRIAL"/>
    <property type="match status" value="1"/>
</dbReference>
<dbReference type="PANTHER" id="PTHR11538">
    <property type="entry name" value="PHENYLALANYL-TRNA SYNTHETASE"/>
    <property type="match status" value="1"/>
</dbReference>
<dbReference type="Pfam" id="PF02912">
    <property type="entry name" value="Phe_tRNA-synt_N"/>
    <property type="match status" value="1"/>
</dbReference>
<dbReference type="Pfam" id="PF01409">
    <property type="entry name" value="tRNA-synt_2d"/>
    <property type="match status" value="1"/>
</dbReference>
<dbReference type="SUPFAM" id="SSF55681">
    <property type="entry name" value="Class II aaRS and biotin synthetases"/>
    <property type="match status" value="1"/>
</dbReference>
<dbReference type="SUPFAM" id="SSF46589">
    <property type="entry name" value="tRNA-binding arm"/>
    <property type="match status" value="1"/>
</dbReference>
<dbReference type="PROSITE" id="PS50862">
    <property type="entry name" value="AA_TRNA_LIGASE_II"/>
    <property type="match status" value="1"/>
</dbReference>
<evidence type="ECO:0000255" key="1">
    <source>
        <dbReference type="HAMAP-Rule" id="MF_00281"/>
    </source>
</evidence>
<accession>Q740J1</accession>
<protein>
    <recommendedName>
        <fullName evidence="1">Phenylalanine--tRNA ligase alpha subunit</fullName>
        <ecNumber evidence="1">6.1.1.20</ecNumber>
    </recommendedName>
    <alternativeName>
        <fullName evidence="1">Phenylalanyl-tRNA synthetase alpha subunit</fullName>
        <shortName evidence="1">PheRS</shortName>
    </alternativeName>
</protein>
<proteinExistence type="inferred from homology"/>
<comment type="catalytic activity">
    <reaction evidence="1">
        <text>tRNA(Phe) + L-phenylalanine + ATP = L-phenylalanyl-tRNA(Phe) + AMP + diphosphate + H(+)</text>
        <dbReference type="Rhea" id="RHEA:19413"/>
        <dbReference type="Rhea" id="RHEA-COMP:9668"/>
        <dbReference type="Rhea" id="RHEA-COMP:9699"/>
        <dbReference type="ChEBI" id="CHEBI:15378"/>
        <dbReference type="ChEBI" id="CHEBI:30616"/>
        <dbReference type="ChEBI" id="CHEBI:33019"/>
        <dbReference type="ChEBI" id="CHEBI:58095"/>
        <dbReference type="ChEBI" id="CHEBI:78442"/>
        <dbReference type="ChEBI" id="CHEBI:78531"/>
        <dbReference type="ChEBI" id="CHEBI:456215"/>
        <dbReference type="EC" id="6.1.1.20"/>
    </reaction>
</comment>
<comment type="cofactor">
    <cofactor evidence="1">
        <name>Mg(2+)</name>
        <dbReference type="ChEBI" id="CHEBI:18420"/>
    </cofactor>
    <text evidence="1">Binds 2 magnesium ions per tetramer.</text>
</comment>
<comment type="subunit">
    <text evidence="1">Tetramer of two alpha and two beta subunits.</text>
</comment>
<comment type="subcellular location">
    <subcellularLocation>
        <location evidence="1">Cytoplasm</location>
    </subcellularLocation>
</comment>
<comment type="similarity">
    <text evidence="1">Belongs to the class-II aminoacyl-tRNA synthetase family. Phe-tRNA synthetase alpha subunit type 1 subfamily.</text>
</comment>
<organism>
    <name type="scientific">Mycolicibacterium paratuberculosis (strain ATCC BAA-968 / K-10)</name>
    <name type="common">Mycobacterium paratuberculosis</name>
    <dbReference type="NCBI Taxonomy" id="262316"/>
    <lineage>
        <taxon>Bacteria</taxon>
        <taxon>Bacillati</taxon>
        <taxon>Actinomycetota</taxon>
        <taxon>Actinomycetes</taxon>
        <taxon>Mycobacteriales</taxon>
        <taxon>Mycobacteriaceae</taxon>
        <taxon>Mycobacterium</taxon>
        <taxon>Mycobacterium avium complex (MAC)</taxon>
    </lineage>
</organism>
<name>SYFA_MYCPA</name>
<gene>
    <name evidence="1" type="primary">pheS</name>
    <name type="ordered locus">MAP_1359</name>
</gene>
<keyword id="KW-0030">Aminoacyl-tRNA synthetase</keyword>
<keyword id="KW-0067">ATP-binding</keyword>
<keyword id="KW-0963">Cytoplasm</keyword>
<keyword id="KW-0436">Ligase</keyword>
<keyword id="KW-0460">Magnesium</keyword>
<keyword id="KW-0479">Metal-binding</keyword>
<keyword id="KW-0547">Nucleotide-binding</keyword>
<keyword id="KW-0648">Protein biosynthesis</keyword>
<keyword id="KW-1185">Reference proteome</keyword>
<sequence length="347" mass="37935">MGDQPVDLSETALAEAVGAARQAFARAGDLDALARLKTEHLGDRAPLALARQALGGVPKDQRADAGRRVNAARAQAQQAYDERLDVLRAERDAAVLVAERIDVTLPSTRQPVGARHPITILAEHIADTFIAMGWELAEGPEVEAEQFNFDALNFPADHPARSEQDTFYIAPEGSRQLLRTHTSPVQVRTLLARELPVYVISIGRTFRTDELDATHTPVFHQVEGLAVDRGLSMAHLRGTLDAFARAEFGPQARTRIRPHFFPFTEPSAEVDVWFVGKKGGAGWVEWGGCGMVHPNVLRAAGIDPDVYSGFAFGMGLERTLQFRNGIPDMRDMVEGDVRFLLPFGVGA</sequence>
<feature type="chain" id="PRO_0000231995" description="Phenylalanine--tRNA ligase alpha subunit">
    <location>
        <begin position="1"/>
        <end position="347"/>
    </location>
</feature>
<feature type="binding site" evidence="1">
    <location>
        <position position="265"/>
    </location>
    <ligand>
        <name>Mg(2+)</name>
        <dbReference type="ChEBI" id="CHEBI:18420"/>
        <note>shared with beta subunit</note>
    </ligand>
</feature>
<reference key="1">
    <citation type="journal article" date="2005" name="Proc. Natl. Acad. Sci. U.S.A.">
        <title>The complete genome sequence of Mycobacterium avium subspecies paratuberculosis.</title>
        <authorList>
            <person name="Li L."/>
            <person name="Bannantine J.P."/>
            <person name="Zhang Q."/>
            <person name="Amonsin A."/>
            <person name="May B.J."/>
            <person name="Alt D."/>
            <person name="Banerji N."/>
            <person name="Kanjilal S."/>
            <person name="Kapur V."/>
        </authorList>
    </citation>
    <scope>NUCLEOTIDE SEQUENCE [LARGE SCALE GENOMIC DNA]</scope>
    <source>
        <strain>ATCC BAA-968 / K-10</strain>
    </source>
</reference>